<dbReference type="EMBL" id="BA000017">
    <property type="protein sequence ID" value="BAB56650.1"/>
    <property type="molecule type" value="Genomic_DNA"/>
</dbReference>
<dbReference type="RefSeq" id="WP_000377064.1">
    <property type="nucleotide sequence ID" value="NC_002758.2"/>
</dbReference>
<dbReference type="SMR" id="P67351"/>
<dbReference type="KEGG" id="sav:SAV0488"/>
<dbReference type="HOGENOM" id="CLU_135650_0_3_9"/>
<dbReference type="PhylomeDB" id="P67351"/>
<dbReference type="Proteomes" id="UP000002481">
    <property type="component" value="Chromosome"/>
</dbReference>
<dbReference type="CDD" id="cd10456">
    <property type="entry name" value="GIY-YIG_UPF0213"/>
    <property type="match status" value="1"/>
</dbReference>
<dbReference type="Gene3D" id="3.40.1440.10">
    <property type="entry name" value="GIY-YIG endonuclease"/>
    <property type="match status" value="1"/>
</dbReference>
<dbReference type="InterPro" id="IPR000305">
    <property type="entry name" value="GIY-YIG_endonuc"/>
</dbReference>
<dbReference type="InterPro" id="IPR035901">
    <property type="entry name" value="GIY-YIG_endonuc_sf"/>
</dbReference>
<dbReference type="InterPro" id="IPR050190">
    <property type="entry name" value="UPF0213_domain"/>
</dbReference>
<dbReference type="PANTHER" id="PTHR34477">
    <property type="entry name" value="UPF0213 PROTEIN YHBQ"/>
    <property type="match status" value="1"/>
</dbReference>
<dbReference type="PANTHER" id="PTHR34477:SF1">
    <property type="entry name" value="UPF0213 PROTEIN YHBQ"/>
    <property type="match status" value="1"/>
</dbReference>
<dbReference type="Pfam" id="PF01541">
    <property type="entry name" value="GIY-YIG"/>
    <property type="match status" value="1"/>
</dbReference>
<dbReference type="SMART" id="SM00465">
    <property type="entry name" value="GIYc"/>
    <property type="match status" value="1"/>
</dbReference>
<dbReference type="SUPFAM" id="SSF82771">
    <property type="entry name" value="GIY-YIG endonuclease"/>
    <property type="match status" value="1"/>
</dbReference>
<dbReference type="PROSITE" id="PS50164">
    <property type="entry name" value="GIY_YIG"/>
    <property type="match status" value="1"/>
</dbReference>
<sequence length="82" mass="9831">MDSHFVYIVKCSDGSLYTGYAKDVNARVEKHNRGQGAKYTKVRRPVHLVYQEMYETKSEALKREYEIKTYTRQKKLRLIKER</sequence>
<evidence type="ECO:0000255" key="1">
    <source>
        <dbReference type="PROSITE-ProRule" id="PRU00977"/>
    </source>
</evidence>
<evidence type="ECO:0000305" key="2"/>
<protein>
    <recommendedName>
        <fullName>UPF0213 protein SAV0488</fullName>
    </recommendedName>
</protein>
<gene>
    <name type="ordered locus">SAV0488</name>
</gene>
<reference key="1">
    <citation type="journal article" date="2001" name="Lancet">
        <title>Whole genome sequencing of meticillin-resistant Staphylococcus aureus.</title>
        <authorList>
            <person name="Kuroda M."/>
            <person name="Ohta T."/>
            <person name="Uchiyama I."/>
            <person name="Baba T."/>
            <person name="Yuzawa H."/>
            <person name="Kobayashi I."/>
            <person name="Cui L."/>
            <person name="Oguchi A."/>
            <person name="Aoki K."/>
            <person name="Nagai Y."/>
            <person name="Lian J.-Q."/>
            <person name="Ito T."/>
            <person name="Kanamori M."/>
            <person name="Matsumaru H."/>
            <person name="Maruyama A."/>
            <person name="Murakami H."/>
            <person name="Hosoyama A."/>
            <person name="Mizutani-Ui Y."/>
            <person name="Takahashi N.K."/>
            <person name="Sawano T."/>
            <person name="Inoue R."/>
            <person name="Kaito C."/>
            <person name="Sekimizu K."/>
            <person name="Hirakawa H."/>
            <person name="Kuhara S."/>
            <person name="Goto S."/>
            <person name="Yabuzaki J."/>
            <person name="Kanehisa M."/>
            <person name="Yamashita A."/>
            <person name="Oshima K."/>
            <person name="Furuya K."/>
            <person name="Yoshino C."/>
            <person name="Shiba T."/>
            <person name="Hattori M."/>
            <person name="Ogasawara N."/>
            <person name="Hayashi H."/>
            <person name="Hiramatsu K."/>
        </authorList>
    </citation>
    <scope>NUCLEOTIDE SEQUENCE [LARGE SCALE GENOMIC DNA]</scope>
    <source>
        <strain>Mu50 / ATCC 700699</strain>
    </source>
</reference>
<name>Y488_STAAM</name>
<comment type="similarity">
    <text evidence="2">Belongs to the UPF0213 family.</text>
</comment>
<accession>P67351</accession>
<accession>Q99WB5</accession>
<organism>
    <name type="scientific">Staphylococcus aureus (strain Mu50 / ATCC 700699)</name>
    <dbReference type="NCBI Taxonomy" id="158878"/>
    <lineage>
        <taxon>Bacteria</taxon>
        <taxon>Bacillati</taxon>
        <taxon>Bacillota</taxon>
        <taxon>Bacilli</taxon>
        <taxon>Bacillales</taxon>
        <taxon>Staphylococcaceae</taxon>
        <taxon>Staphylococcus</taxon>
    </lineage>
</organism>
<proteinExistence type="inferred from homology"/>
<feature type="chain" id="PRO_0000161381" description="UPF0213 protein SAV0488">
    <location>
        <begin position="1"/>
        <end position="82"/>
    </location>
</feature>
<feature type="domain" description="GIY-YIG" evidence="1">
    <location>
        <begin position="2"/>
        <end position="77"/>
    </location>
</feature>